<evidence type="ECO:0000255" key="1">
    <source>
        <dbReference type="HAMAP-Rule" id="MF_00021"/>
    </source>
</evidence>
<feature type="chain" id="PRO_0000154890" description="Probable tRNA sulfurtransferase">
    <location>
        <begin position="1"/>
        <end position="396"/>
    </location>
</feature>
<feature type="domain" description="THUMP" evidence="1">
    <location>
        <begin position="63"/>
        <end position="166"/>
    </location>
</feature>
<feature type="binding site" evidence="1">
    <location>
        <begin position="184"/>
        <end position="185"/>
    </location>
    <ligand>
        <name>ATP</name>
        <dbReference type="ChEBI" id="CHEBI:30616"/>
    </ligand>
</feature>
<feature type="binding site" evidence="1">
    <location>
        <position position="266"/>
    </location>
    <ligand>
        <name>ATP</name>
        <dbReference type="ChEBI" id="CHEBI:30616"/>
    </ligand>
</feature>
<feature type="binding site" evidence="1">
    <location>
        <position position="288"/>
    </location>
    <ligand>
        <name>ATP</name>
        <dbReference type="ChEBI" id="CHEBI:30616"/>
    </ligand>
</feature>
<feature type="binding site" evidence="1">
    <location>
        <position position="297"/>
    </location>
    <ligand>
        <name>ATP</name>
        <dbReference type="ChEBI" id="CHEBI:30616"/>
    </ligand>
</feature>
<accession>Q9YEW8</accession>
<comment type="function">
    <text evidence="1">Catalyzes the ATP-dependent transfer of a sulfur to tRNA to produce 4-thiouridine in position 8 of tRNAs, which functions as a near-UV photosensor. Also catalyzes the transfer of sulfur to the sulfur carrier protein ThiS, forming ThiS-thiocarboxylate. This is a step in the synthesis of thiazole, in the thiamine biosynthesis pathway. The sulfur is donated as persulfide by IscS.</text>
</comment>
<comment type="catalytic activity">
    <reaction evidence="1">
        <text>[ThiI sulfur-carrier protein]-S-sulfanyl-L-cysteine + a uridine in tRNA + 2 reduced [2Fe-2S]-[ferredoxin] + ATP + H(+) = [ThiI sulfur-carrier protein]-L-cysteine + a 4-thiouridine in tRNA + 2 oxidized [2Fe-2S]-[ferredoxin] + AMP + diphosphate</text>
        <dbReference type="Rhea" id="RHEA:24176"/>
        <dbReference type="Rhea" id="RHEA-COMP:10000"/>
        <dbReference type="Rhea" id="RHEA-COMP:10001"/>
        <dbReference type="Rhea" id="RHEA-COMP:13337"/>
        <dbReference type="Rhea" id="RHEA-COMP:13338"/>
        <dbReference type="Rhea" id="RHEA-COMP:13339"/>
        <dbReference type="Rhea" id="RHEA-COMP:13340"/>
        <dbReference type="ChEBI" id="CHEBI:15378"/>
        <dbReference type="ChEBI" id="CHEBI:29950"/>
        <dbReference type="ChEBI" id="CHEBI:30616"/>
        <dbReference type="ChEBI" id="CHEBI:33019"/>
        <dbReference type="ChEBI" id="CHEBI:33737"/>
        <dbReference type="ChEBI" id="CHEBI:33738"/>
        <dbReference type="ChEBI" id="CHEBI:61963"/>
        <dbReference type="ChEBI" id="CHEBI:65315"/>
        <dbReference type="ChEBI" id="CHEBI:136798"/>
        <dbReference type="ChEBI" id="CHEBI:456215"/>
        <dbReference type="EC" id="2.8.1.4"/>
    </reaction>
</comment>
<comment type="catalytic activity">
    <reaction evidence="1">
        <text>[ThiS sulfur-carrier protein]-C-terminal Gly-Gly-AMP + S-sulfanyl-L-cysteinyl-[cysteine desulfurase] + AH2 = [ThiS sulfur-carrier protein]-C-terminal-Gly-aminoethanethioate + L-cysteinyl-[cysteine desulfurase] + A + AMP + 2 H(+)</text>
        <dbReference type="Rhea" id="RHEA:43340"/>
        <dbReference type="Rhea" id="RHEA-COMP:12157"/>
        <dbReference type="Rhea" id="RHEA-COMP:12158"/>
        <dbReference type="Rhea" id="RHEA-COMP:12910"/>
        <dbReference type="Rhea" id="RHEA-COMP:19908"/>
        <dbReference type="ChEBI" id="CHEBI:13193"/>
        <dbReference type="ChEBI" id="CHEBI:15378"/>
        <dbReference type="ChEBI" id="CHEBI:17499"/>
        <dbReference type="ChEBI" id="CHEBI:29950"/>
        <dbReference type="ChEBI" id="CHEBI:61963"/>
        <dbReference type="ChEBI" id="CHEBI:90618"/>
        <dbReference type="ChEBI" id="CHEBI:232372"/>
        <dbReference type="ChEBI" id="CHEBI:456215"/>
    </reaction>
</comment>
<comment type="pathway">
    <text evidence="1">Cofactor biosynthesis; thiamine diphosphate biosynthesis.</text>
</comment>
<comment type="subcellular location">
    <subcellularLocation>
        <location evidence="1">Cytoplasm</location>
    </subcellularLocation>
</comment>
<comment type="similarity">
    <text evidence="1">Belongs to the ThiI family.</text>
</comment>
<name>THII_AERPE</name>
<reference key="1">
    <citation type="journal article" date="1999" name="DNA Res.">
        <title>Complete genome sequence of an aerobic hyper-thermophilic crenarchaeon, Aeropyrum pernix K1.</title>
        <authorList>
            <person name="Kawarabayasi Y."/>
            <person name="Hino Y."/>
            <person name="Horikawa H."/>
            <person name="Yamazaki S."/>
            <person name="Haikawa Y."/>
            <person name="Jin-no K."/>
            <person name="Takahashi M."/>
            <person name="Sekine M."/>
            <person name="Baba S."/>
            <person name="Ankai A."/>
            <person name="Kosugi H."/>
            <person name="Hosoyama A."/>
            <person name="Fukui S."/>
            <person name="Nagai Y."/>
            <person name="Nishijima K."/>
            <person name="Nakazawa H."/>
            <person name="Takamiya M."/>
            <person name="Masuda S."/>
            <person name="Funahashi T."/>
            <person name="Tanaka T."/>
            <person name="Kudoh Y."/>
            <person name="Yamazaki J."/>
            <person name="Kushida N."/>
            <person name="Oguchi A."/>
            <person name="Aoki K."/>
            <person name="Kubota K."/>
            <person name="Nakamura Y."/>
            <person name="Nomura N."/>
            <person name="Sako Y."/>
            <person name="Kikuchi H."/>
        </authorList>
    </citation>
    <scope>NUCLEOTIDE SEQUENCE [LARGE SCALE GENOMIC DNA]</scope>
    <source>
        <strain>ATCC 700893 / DSM 11879 / JCM 9820 / NBRC 100138 / K1</strain>
    </source>
</reference>
<dbReference type="EC" id="2.8.1.4" evidence="1"/>
<dbReference type="EMBL" id="BA000002">
    <property type="protein sequence ID" value="BAA79428.2"/>
    <property type="molecule type" value="Genomic_DNA"/>
</dbReference>
<dbReference type="PIR" id="H72741">
    <property type="entry name" value="H72741"/>
</dbReference>
<dbReference type="RefSeq" id="WP_010865765.1">
    <property type="nucleotide sequence ID" value="NC_000854.2"/>
</dbReference>
<dbReference type="SMR" id="Q9YEW8"/>
<dbReference type="STRING" id="272557.APE_0465.1"/>
<dbReference type="EnsemblBacteria" id="BAA79428">
    <property type="protein sequence ID" value="BAA79428"/>
    <property type="gene ID" value="APE_0465.1"/>
</dbReference>
<dbReference type="GeneID" id="1444648"/>
<dbReference type="KEGG" id="ape:APE_0465.1"/>
<dbReference type="PATRIC" id="fig|272557.25.peg.352"/>
<dbReference type="eggNOG" id="arCOG00038">
    <property type="taxonomic scope" value="Archaea"/>
</dbReference>
<dbReference type="UniPathway" id="UPA00060"/>
<dbReference type="Proteomes" id="UP000002518">
    <property type="component" value="Chromosome"/>
</dbReference>
<dbReference type="GO" id="GO:0005829">
    <property type="term" value="C:cytosol"/>
    <property type="evidence" value="ECO:0007669"/>
    <property type="project" value="TreeGrafter"/>
</dbReference>
<dbReference type="GO" id="GO:0005524">
    <property type="term" value="F:ATP binding"/>
    <property type="evidence" value="ECO:0007669"/>
    <property type="project" value="UniProtKB-UniRule"/>
</dbReference>
<dbReference type="GO" id="GO:0004810">
    <property type="term" value="F:CCA tRNA nucleotidyltransferase activity"/>
    <property type="evidence" value="ECO:0007669"/>
    <property type="project" value="InterPro"/>
</dbReference>
<dbReference type="GO" id="GO:0000049">
    <property type="term" value="F:tRNA binding"/>
    <property type="evidence" value="ECO:0007669"/>
    <property type="project" value="UniProtKB-UniRule"/>
</dbReference>
<dbReference type="GO" id="GO:0140741">
    <property type="term" value="F:tRNA-uracil-4 sulfurtransferase activity"/>
    <property type="evidence" value="ECO:0007669"/>
    <property type="project" value="UniProtKB-EC"/>
</dbReference>
<dbReference type="GO" id="GO:0009228">
    <property type="term" value="P:thiamine biosynthetic process"/>
    <property type="evidence" value="ECO:0007669"/>
    <property type="project" value="UniProtKB-KW"/>
</dbReference>
<dbReference type="GO" id="GO:0009229">
    <property type="term" value="P:thiamine diphosphate biosynthetic process"/>
    <property type="evidence" value="ECO:0007669"/>
    <property type="project" value="UniProtKB-UniRule"/>
</dbReference>
<dbReference type="GO" id="GO:0052837">
    <property type="term" value="P:thiazole biosynthetic process"/>
    <property type="evidence" value="ECO:0007669"/>
    <property type="project" value="TreeGrafter"/>
</dbReference>
<dbReference type="GO" id="GO:0002937">
    <property type="term" value="P:tRNA 4-thiouridine biosynthesis"/>
    <property type="evidence" value="ECO:0007669"/>
    <property type="project" value="TreeGrafter"/>
</dbReference>
<dbReference type="CDD" id="cd01712">
    <property type="entry name" value="PPase_ThiI"/>
    <property type="match status" value="1"/>
</dbReference>
<dbReference type="CDD" id="cd11716">
    <property type="entry name" value="THUMP_ThiI"/>
    <property type="match status" value="1"/>
</dbReference>
<dbReference type="Gene3D" id="3.30.2130.30">
    <property type="match status" value="1"/>
</dbReference>
<dbReference type="Gene3D" id="3.40.50.620">
    <property type="entry name" value="HUPs"/>
    <property type="match status" value="1"/>
</dbReference>
<dbReference type="HAMAP" id="MF_00021">
    <property type="entry name" value="ThiI"/>
    <property type="match status" value="1"/>
</dbReference>
<dbReference type="InterPro" id="IPR014729">
    <property type="entry name" value="Rossmann-like_a/b/a_fold"/>
</dbReference>
<dbReference type="InterPro" id="IPR020536">
    <property type="entry name" value="ThiI_AANH"/>
</dbReference>
<dbReference type="InterPro" id="IPR054173">
    <property type="entry name" value="ThiI_fer"/>
</dbReference>
<dbReference type="InterPro" id="IPR004114">
    <property type="entry name" value="THUMP_dom"/>
</dbReference>
<dbReference type="InterPro" id="IPR049962">
    <property type="entry name" value="THUMP_ThiI"/>
</dbReference>
<dbReference type="InterPro" id="IPR003720">
    <property type="entry name" value="tRNA_STrfase"/>
</dbReference>
<dbReference type="InterPro" id="IPR050102">
    <property type="entry name" value="tRNA_sulfurtransferase_ThiI"/>
</dbReference>
<dbReference type="PANTHER" id="PTHR43209">
    <property type="entry name" value="TRNA SULFURTRANSFERASE"/>
    <property type="match status" value="1"/>
</dbReference>
<dbReference type="PANTHER" id="PTHR43209:SF1">
    <property type="entry name" value="TRNA SULFURTRANSFERASE"/>
    <property type="match status" value="1"/>
</dbReference>
<dbReference type="Pfam" id="PF02568">
    <property type="entry name" value="ThiI"/>
    <property type="match status" value="1"/>
</dbReference>
<dbReference type="Pfam" id="PF22025">
    <property type="entry name" value="ThiI_fer"/>
    <property type="match status" value="1"/>
</dbReference>
<dbReference type="Pfam" id="PF02926">
    <property type="entry name" value="THUMP"/>
    <property type="match status" value="1"/>
</dbReference>
<dbReference type="SMART" id="SM00981">
    <property type="entry name" value="THUMP"/>
    <property type="match status" value="1"/>
</dbReference>
<dbReference type="SUPFAM" id="SSF52402">
    <property type="entry name" value="Adenine nucleotide alpha hydrolases-like"/>
    <property type="match status" value="1"/>
</dbReference>
<dbReference type="SUPFAM" id="SSF143437">
    <property type="entry name" value="THUMP domain-like"/>
    <property type="match status" value="1"/>
</dbReference>
<dbReference type="PROSITE" id="PS51165">
    <property type="entry name" value="THUMP"/>
    <property type="match status" value="1"/>
</dbReference>
<gene>
    <name evidence="1" type="primary">thiI</name>
    <name type="ordered locus">APE_0465.1</name>
</gene>
<keyword id="KW-0067">ATP-binding</keyword>
<keyword id="KW-0963">Cytoplasm</keyword>
<keyword id="KW-0547">Nucleotide-binding</keyword>
<keyword id="KW-1185">Reference proteome</keyword>
<keyword id="KW-0694">RNA-binding</keyword>
<keyword id="KW-0784">Thiamine biosynthesis</keyword>
<keyword id="KW-0808">Transferase</keyword>
<keyword id="KW-0820">tRNA-binding</keyword>
<protein>
    <recommendedName>
        <fullName evidence="1">Probable tRNA sulfurtransferase</fullName>
        <ecNumber evidence="1">2.8.1.4</ecNumber>
    </recommendedName>
    <alternativeName>
        <fullName evidence="1">Sulfur carrier protein ThiS sulfurtransferase</fullName>
    </alternativeName>
    <alternativeName>
        <fullName evidence="1">Thiamine biosynthesis protein ThiI</fullName>
    </alternativeName>
    <alternativeName>
        <fullName evidence="1">tRNA 4-thiouridine synthase</fullName>
    </alternativeName>
</protein>
<sequence>MEYNVVLVRYSEIAVKGGYTRSRMERLLLRALEESLAAAGVEAEVERLQGRVLVRLRSPGDAAAAARASARVFGVKSVSPAVEVEYSGIEDLAEKAAEFFGERVRGRVFRVRARRSGVEGFTSKDVERLLGKLLLERGAGGVDLEKPEYTAYVEVRGRRAYFFDTINPGPGGLPVGSEEPSLALYSGGFDSGVAAWMIMRRGSPVHLAFYDFGVPEALEVAVEGAKTLAGEWAWGYRPRLYVVNFRGAALIVNGLVKPSYRTLVLRRLMLLHAQDLAAREGFEALVTGESVGQVASQTVRNLRLISSGLELPVLRPLAGMDKDEIVEKSREIGLYDIARRQVEVCGVDQPPNPRASPQGFRSEFEKVRDIFIPPPRVFDLKGESLHSILKTLGLRG</sequence>
<proteinExistence type="inferred from homology"/>
<organism>
    <name type="scientific">Aeropyrum pernix (strain ATCC 700893 / DSM 11879 / JCM 9820 / NBRC 100138 / K1)</name>
    <dbReference type="NCBI Taxonomy" id="272557"/>
    <lineage>
        <taxon>Archaea</taxon>
        <taxon>Thermoproteota</taxon>
        <taxon>Thermoprotei</taxon>
        <taxon>Desulfurococcales</taxon>
        <taxon>Desulfurococcaceae</taxon>
        <taxon>Aeropyrum</taxon>
    </lineage>
</organism>